<name>ASNA_CRYPI</name>
<keyword id="KW-0067">ATP-binding</keyword>
<keyword id="KW-0963">Cytoplasm</keyword>
<keyword id="KW-0256">Endoplasmic reticulum</keyword>
<keyword id="KW-0378">Hydrolase</keyword>
<keyword id="KW-0547">Nucleotide-binding</keyword>
<keyword id="KW-1185">Reference proteome</keyword>
<keyword id="KW-0813">Transport</keyword>
<protein>
    <recommendedName>
        <fullName evidence="1">ATPase ASNA1 homolog</fullName>
        <ecNumber evidence="1">3.6.-.-</ecNumber>
    </recommendedName>
    <alternativeName>
        <fullName evidence="1">Arsenical pump-driving ATPase homolog</fullName>
    </alternativeName>
    <alternativeName>
        <fullName evidence="1">Arsenite-stimulated ATPase</fullName>
    </alternativeName>
</protein>
<comment type="function">
    <text evidence="1">ATPase required for the post-translational delivery of tail-anchored (TA) proteins to the endoplasmic reticulum. Recognizes and selectively binds the transmembrane domain of TA proteins in the cytosol. This complex then targets to the endoplasmic reticulum by membrane-bound receptors, where the tail-anchored protein is released for insertion. This process is regulated by ATP binding and hydrolysis. ATP binding drives the homodimer towards the closed dimer state, facilitating recognition of newly synthesized TA membrane proteins. ATP hydrolysis is required for insertion. Subsequently, the homodimer reverts towards the open dimer state, lowering its affinity for the membrane-bound receptor, and returning it to the cytosol to initiate a new round of targeting.</text>
</comment>
<comment type="subunit">
    <text evidence="1">Homodimer.</text>
</comment>
<comment type="subcellular location">
    <subcellularLocation>
        <location evidence="1">Cytoplasm</location>
    </subcellularLocation>
    <subcellularLocation>
        <location evidence="1">Endoplasmic reticulum</location>
    </subcellularLocation>
</comment>
<comment type="similarity">
    <text evidence="1">Belongs to the arsA ATPase family.</text>
</comment>
<organism>
    <name type="scientific">Cryptosporidium parvum (strain Iowa II)</name>
    <dbReference type="NCBI Taxonomy" id="353152"/>
    <lineage>
        <taxon>Eukaryota</taxon>
        <taxon>Sar</taxon>
        <taxon>Alveolata</taxon>
        <taxon>Apicomplexa</taxon>
        <taxon>Conoidasida</taxon>
        <taxon>Coccidia</taxon>
        <taxon>Eucoccidiorida</taxon>
        <taxon>Eimeriorina</taxon>
        <taxon>Cryptosporidiidae</taxon>
        <taxon>Cryptosporidium</taxon>
    </lineage>
</organism>
<proteinExistence type="inferred from homology"/>
<reference key="1">
    <citation type="journal article" date="2004" name="Science">
        <title>Complete genome sequence of the apicomplexan, Cryptosporidium parvum.</title>
        <authorList>
            <person name="Abrahamsen M.S."/>
            <person name="Templeton T.J."/>
            <person name="Enomoto S."/>
            <person name="Abrahante J.E."/>
            <person name="Zhu G."/>
            <person name="Lancto C.A."/>
            <person name="Deng M."/>
            <person name="Liu C."/>
            <person name="Widmer G."/>
            <person name="Tzipori S."/>
            <person name="Buck G.A."/>
            <person name="Xu P."/>
            <person name="Bankier A.T."/>
            <person name="Dear P.H."/>
            <person name="Konfortov B.A."/>
            <person name="Spriggs H.F."/>
            <person name="Iyer L."/>
            <person name="Anantharaman V."/>
            <person name="Aravind L."/>
            <person name="Kapur V."/>
        </authorList>
    </citation>
    <scope>NUCLEOTIDE SEQUENCE [LARGE SCALE GENOMIC DNA]</scope>
    <source>
        <strain>Iowa II</strain>
    </source>
</reference>
<gene>
    <name type="ORF">cgd7_4070</name>
</gene>
<dbReference type="EC" id="3.6.-.-" evidence="1"/>
<dbReference type="EMBL" id="AAEE01000001">
    <property type="protein sequence ID" value="EAZ51595.1"/>
    <property type="molecule type" value="Genomic_DNA"/>
</dbReference>
<dbReference type="RefSeq" id="XP_001388402.1">
    <property type="nucleotide sequence ID" value="XM_001388365.1"/>
</dbReference>
<dbReference type="SMR" id="A3FPQ6"/>
<dbReference type="FunCoup" id="A3FPQ6">
    <property type="interactions" value="389"/>
</dbReference>
<dbReference type="STRING" id="353152.A3FPQ6"/>
<dbReference type="EnsemblProtists" id="EAZ51595">
    <property type="protein sequence ID" value="EAZ51595"/>
    <property type="gene ID" value="cgd7_4070"/>
</dbReference>
<dbReference type="GeneID" id="3371804"/>
<dbReference type="KEGG" id="cpv:cgd7_4070"/>
<dbReference type="InParanoid" id="A3FPQ6"/>
<dbReference type="OMA" id="IGNNEPR"/>
<dbReference type="OrthoDB" id="1770at2759"/>
<dbReference type="Proteomes" id="UP000006726">
    <property type="component" value="Chromosome 7"/>
</dbReference>
<dbReference type="GO" id="GO:0043529">
    <property type="term" value="C:GET complex"/>
    <property type="evidence" value="ECO:0007669"/>
    <property type="project" value="TreeGrafter"/>
</dbReference>
<dbReference type="GO" id="GO:0005524">
    <property type="term" value="F:ATP binding"/>
    <property type="evidence" value="ECO:0007669"/>
    <property type="project" value="UniProtKB-UniRule"/>
</dbReference>
<dbReference type="GO" id="GO:0016887">
    <property type="term" value="F:ATP hydrolysis activity"/>
    <property type="evidence" value="ECO:0007669"/>
    <property type="project" value="InterPro"/>
</dbReference>
<dbReference type="GO" id="GO:0071816">
    <property type="term" value="P:tail-anchored membrane protein insertion into ER membrane"/>
    <property type="evidence" value="ECO:0007669"/>
    <property type="project" value="TreeGrafter"/>
</dbReference>
<dbReference type="CDD" id="cd02035">
    <property type="entry name" value="ArsA"/>
    <property type="match status" value="1"/>
</dbReference>
<dbReference type="FunFam" id="3.40.50.300:FF:001459">
    <property type="entry name" value="ATPase ASNA1 homolog"/>
    <property type="match status" value="1"/>
</dbReference>
<dbReference type="Gene3D" id="3.40.50.300">
    <property type="entry name" value="P-loop containing nucleotide triphosphate hydrolases"/>
    <property type="match status" value="1"/>
</dbReference>
<dbReference type="HAMAP" id="MF_03112">
    <property type="entry name" value="Asna1_Get3"/>
    <property type="match status" value="1"/>
</dbReference>
<dbReference type="InterPro" id="IPR025723">
    <property type="entry name" value="Anion-transp_ATPase-like_dom"/>
</dbReference>
<dbReference type="InterPro" id="IPR016300">
    <property type="entry name" value="ATPase_ArsA/GET3"/>
</dbReference>
<dbReference type="InterPro" id="IPR027542">
    <property type="entry name" value="ATPase_ArsA/GET3_euk"/>
</dbReference>
<dbReference type="InterPro" id="IPR027417">
    <property type="entry name" value="P-loop_NTPase"/>
</dbReference>
<dbReference type="NCBIfam" id="TIGR00345">
    <property type="entry name" value="GET3_arsA_TRC40"/>
    <property type="match status" value="1"/>
</dbReference>
<dbReference type="PANTHER" id="PTHR10803">
    <property type="entry name" value="ARSENICAL PUMP-DRIVING ATPASE ARSENITE-TRANSLOCATING ATPASE"/>
    <property type="match status" value="1"/>
</dbReference>
<dbReference type="PANTHER" id="PTHR10803:SF3">
    <property type="entry name" value="ATPASE GET3"/>
    <property type="match status" value="1"/>
</dbReference>
<dbReference type="Pfam" id="PF02374">
    <property type="entry name" value="ArsA_ATPase"/>
    <property type="match status" value="1"/>
</dbReference>
<dbReference type="SUPFAM" id="SSF52540">
    <property type="entry name" value="P-loop containing nucleoside triphosphate hydrolases"/>
    <property type="match status" value="1"/>
</dbReference>
<sequence length="366" mass="40886">MSTAYFDADCDLEPSLKSLFSLKTLKWIFVGGKGGVGKTTTSCSIASRLAEERESVLILSTDPAHNLSDAFVQKFSNAPTLVNGYKNLYAMELDASYQQAVEFKLKEENSLFSKFLPDLISALPGIDEALGFATLMQSVKSMSYSVIVFDTAPTGHTLRLLSFPSLLEKGLSKLFSIKQNMSGALQLINSVSGNAIEEETLNSKLEDLKAITTSVKETFQDPSKTTFVCVCIPEFLSVYETERLIQELAKQSISCSHIVVNQVMFPIDLPSGNDQGESVLKDSSELLKLEDIPSDHSKLVEFTEKIVCSYNKLLSYSKLLYSKYYSKRNMQMKYLEQIRDLYSYDFHVAYIPTLNNEVSKIRVLIS</sequence>
<accession>A3FPQ6</accession>
<evidence type="ECO:0000255" key="1">
    <source>
        <dbReference type="HAMAP-Rule" id="MF_03112"/>
    </source>
</evidence>
<feature type="chain" id="PRO_0000388166" description="ATPase ASNA1 homolog">
    <location>
        <begin position="1"/>
        <end position="366"/>
    </location>
</feature>
<feature type="active site" evidence="1">
    <location>
        <position position="62"/>
    </location>
</feature>
<feature type="binding site" evidence="1">
    <location>
        <begin position="33"/>
        <end position="40"/>
    </location>
    <ligand>
        <name>ATP</name>
        <dbReference type="ChEBI" id="CHEBI:30616"/>
    </ligand>
</feature>
<feature type="binding site" evidence="1">
    <location>
        <position position="234"/>
    </location>
    <ligand>
        <name>ATP</name>
        <dbReference type="ChEBI" id="CHEBI:30616"/>
    </ligand>
</feature>
<feature type="binding site" evidence="1">
    <location>
        <position position="261"/>
    </location>
    <ligand>
        <name>ATP</name>
        <dbReference type="ChEBI" id="CHEBI:30616"/>
    </ligand>
</feature>